<dbReference type="EMBL" id="CP000243">
    <property type="protein sequence ID" value="ABE09201.1"/>
    <property type="molecule type" value="Genomic_DNA"/>
</dbReference>
<dbReference type="RefSeq" id="WP_000941212.1">
    <property type="nucleotide sequence ID" value="NZ_CP064825.1"/>
</dbReference>
<dbReference type="SMR" id="Q1R613"/>
<dbReference type="GeneID" id="93778674"/>
<dbReference type="KEGG" id="eci:UTI89_C3764"/>
<dbReference type="HOGENOM" id="CLU_078858_2_1_6"/>
<dbReference type="Proteomes" id="UP000001952">
    <property type="component" value="Chromosome"/>
</dbReference>
<dbReference type="GO" id="GO:0022625">
    <property type="term" value="C:cytosolic large ribosomal subunit"/>
    <property type="evidence" value="ECO:0007669"/>
    <property type="project" value="TreeGrafter"/>
</dbReference>
<dbReference type="GO" id="GO:0019843">
    <property type="term" value="F:rRNA binding"/>
    <property type="evidence" value="ECO:0007669"/>
    <property type="project" value="UniProtKB-UniRule"/>
</dbReference>
<dbReference type="GO" id="GO:0003735">
    <property type="term" value="F:structural constituent of ribosome"/>
    <property type="evidence" value="ECO:0007669"/>
    <property type="project" value="InterPro"/>
</dbReference>
<dbReference type="GO" id="GO:0000049">
    <property type="term" value="F:tRNA binding"/>
    <property type="evidence" value="ECO:0007669"/>
    <property type="project" value="UniProtKB-KW"/>
</dbReference>
<dbReference type="GO" id="GO:0006412">
    <property type="term" value="P:translation"/>
    <property type="evidence" value="ECO:0007669"/>
    <property type="project" value="UniProtKB-UniRule"/>
</dbReference>
<dbReference type="CDD" id="cd01433">
    <property type="entry name" value="Ribosomal_L16_L10e"/>
    <property type="match status" value="1"/>
</dbReference>
<dbReference type="FunFam" id="3.90.1170.10:FF:000001">
    <property type="entry name" value="50S ribosomal protein L16"/>
    <property type="match status" value="1"/>
</dbReference>
<dbReference type="Gene3D" id="3.90.1170.10">
    <property type="entry name" value="Ribosomal protein L10e/L16"/>
    <property type="match status" value="1"/>
</dbReference>
<dbReference type="HAMAP" id="MF_01342">
    <property type="entry name" value="Ribosomal_uL16"/>
    <property type="match status" value="1"/>
</dbReference>
<dbReference type="InterPro" id="IPR047873">
    <property type="entry name" value="Ribosomal_uL16"/>
</dbReference>
<dbReference type="InterPro" id="IPR000114">
    <property type="entry name" value="Ribosomal_uL16_bact-type"/>
</dbReference>
<dbReference type="InterPro" id="IPR020798">
    <property type="entry name" value="Ribosomal_uL16_CS"/>
</dbReference>
<dbReference type="InterPro" id="IPR016180">
    <property type="entry name" value="Ribosomal_uL16_dom"/>
</dbReference>
<dbReference type="InterPro" id="IPR036920">
    <property type="entry name" value="Ribosomal_uL16_sf"/>
</dbReference>
<dbReference type="NCBIfam" id="TIGR01164">
    <property type="entry name" value="rplP_bact"/>
    <property type="match status" value="1"/>
</dbReference>
<dbReference type="PANTHER" id="PTHR12220">
    <property type="entry name" value="50S/60S RIBOSOMAL PROTEIN L16"/>
    <property type="match status" value="1"/>
</dbReference>
<dbReference type="PANTHER" id="PTHR12220:SF13">
    <property type="entry name" value="LARGE RIBOSOMAL SUBUNIT PROTEIN UL16M"/>
    <property type="match status" value="1"/>
</dbReference>
<dbReference type="Pfam" id="PF00252">
    <property type="entry name" value="Ribosomal_L16"/>
    <property type="match status" value="1"/>
</dbReference>
<dbReference type="PRINTS" id="PR00060">
    <property type="entry name" value="RIBOSOMALL16"/>
</dbReference>
<dbReference type="SUPFAM" id="SSF54686">
    <property type="entry name" value="Ribosomal protein L16p/L10e"/>
    <property type="match status" value="1"/>
</dbReference>
<dbReference type="PROSITE" id="PS00586">
    <property type="entry name" value="RIBOSOMAL_L16_1"/>
    <property type="match status" value="1"/>
</dbReference>
<dbReference type="PROSITE" id="PS00701">
    <property type="entry name" value="RIBOSOMAL_L16_2"/>
    <property type="match status" value="1"/>
</dbReference>
<gene>
    <name evidence="1" type="primary">rplP</name>
    <name type="ordered locus">UTI89_C3764</name>
</gene>
<comment type="function">
    <text evidence="1">Binds 23S rRNA and is also seen to make contacts with the A and possibly P site tRNAs.</text>
</comment>
<comment type="subunit">
    <text evidence="1">Part of the 50S ribosomal subunit.</text>
</comment>
<comment type="similarity">
    <text evidence="1">Belongs to the universal ribosomal protein uL16 family.</text>
</comment>
<reference key="1">
    <citation type="journal article" date="2006" name="Proc. Natl. Acad. Sci. U.S.A.">
        <title>Identification of genes subject to positive selection in uropathogenic strains of Escherichia coli: a comparative genomics approach.</title>
        <authorList>
            <person name="Chen S.L."/>
            <person name="Hung C.-S."/>
            <person name="Xu J."/>
            <person name="Reigstad C.S."/>
            <person name="Magrini V."/>
            <person name="Sabo A."/>
            <person name="Blasiar D."/>
            <person name="Bieri T."/>
            <person name="Meyer R.R."/>
            <person name="Ozersky P."/>
            <person name="Armstrong J.R."/>
            <person name="Fulton R.S."/>
            <person name="Latreille J.P."/>
            <person name="Spieth J."/>
            <person name="Hooton T.M."/>
            <person name="Mardis E.R."/>
            <person name="Hultgren S.J."/>
            <person name="Gordon J.I."/>
        </authorList>
    </citation>
    <scope>NUCLEOTIDE SEQUENCE [LARGE SCALE GENOMIC DNA]</scope>
    <source>
        <strain>UTI89 / UPEC</strain>
    </source>
</reference>
<protein>
    <recommendedName>
        <fullName evidence="1">Large ribosomal subunit protein uL16</fullName>
    </recommendedName>
    <alternativeName>
        <fullName evidence="2">50S ribosomal protein L16</fullName>
    </alternativeName>
</protein>
<evidence type="ECO:0000255" key="1">
    <source>
        <dbReference type="HAMAP-Rule" id="MF_01342"/>
    </source>
</evidence>
<evidence type="ECO:0000305" key="2"/>
<proteinExistence type="inferred from homology"/>
<feature type="chain" id="PRO_0000251633" description="Large ribosomal subunit protein uL16">
    <location>
        <begin position="1"/>
        <end position="136"/>
    </location>
</feature>
<name>RL16_ECOUT</name>
<accession>Q1R613</accession>
<keyword id="KW-0687">Ribonucleoprotein</keyword>
<keyword id="KW-0689">Ribosomal protein</keyword>
<keyword id="KW-0694">RNA-binding</keyword>
<keyword id="KW-0699">rRNA-binding</keyword>
<keyword id="KW-0820">tRNA-binding</keyword>
<organism>
    <name type="scientific">Escherichia coli (strain UTI89 / UPEC)</name>
    <dbReference type="NCBI Taxonomy" id="364106"/>
    <lineage>
        <taxon>Bacteria</taxon>
        <taxon>Pseudomonadati</taxon>
        <taxon>Pseudomonadota</taxon>
        <taxon>Gammaproteobacteria</taxon>
        <taxon>Enterobacterales</taxon>
        <taxon>Enterobacteriaceae</taxon>
        <taxon>Escherichia</taxon>
    </lineage>
</organism>
<sequence>MLQPKRTKFRKMHKGRNRGLAQGTDVSFGSFGLKAVGRGRLTARQIEAARRAMTRAVKRQGKIWIRVFPDKPITEKPLAVRMGKGKGNVEYWVALIQPGKVLYEMDGVPEELAREAFKLAAAKLPIKTTFVTKTVM</sequence>